<accession>Q1LTL8</accession>
<feature type="chain" id="PRO_0000381236" description="Biotin synthase">
    <location>
        <begin position="1"/>
        <end position="342"/>
    </location>
</feature>
<feature type="domain" description="Radical SAM core" evidence="2">
    <location>
        <begin position="38"/>
        <end position="262"/>
    </location>
</feature>
<feature type="binding site" evidence="1">
    <location>
        <position position="53"/>
    </location>
    <ligand>
        <name>[4Fe-4S] cluster</name>
        <dbReference type="ChEBI" id="CHEBI:49883"/>
        <note>4Fe-4S-S-AdoMet</note>
    </ligand>
</feature>
<feature type="binding site" evidence="1">
    <location>
        <position position="57"/>
    </location>
    <ligand>
        <name>[4Fe-4S] cluster</name>
        <dbReference type="ChEBI" id="CHEBI:49883"/>
        <note>4Fe-4S-S-AdoMet</note>
    </ligand>
</feature>
<feature type="binding site" evidence="1">
    <location>
        <position position="60"/>
    </location>
    <ligand>
        <name>[4Fe-4S] cluster</name>
        <dbReference type="ChEBI" id="CHEBI:49883"/>
        <note>4Fe-4S-S-AdoMet</note>
    </ligand>
</feature>
<feature type="binding site" evidence="1">
    <location>
        <position position="97"/>
    </location>
    <ligand>
        <name>[2Fe-2S] cluster</name>
        <dbReference type="ChEBI" id="CHEBI:190135"/>
    </ligand>
</feature>
<feature type="binding site" evidence="1">
    <location>
        <position position="128"/>
    </location>
    <ligand>
        <name>[2Fe-2S] cluster</name>
        <dbReference type="ChEBI" id="CHEBI:190135"/>
    </ligand>
</feature>
<feature type="binding site" evidence="1">
    <location>
        <position position="188"/>
    </location>
    <ligand>
        <name>[2Fe-2S] cluster</name>
        <dbReference type="ChEBI" id="CHEBI:190135"/>
    </ligand>
</feature>
<feature type="binding site" evidence="1">
    <location>
        <position position="260"/>
    </location>
    <ligand>
        <name>[2Fe-2S] cluster</name>
        <dbReference type="ChEBI" id="CHEBI:190135"/>
    </ligand>
</feature>
<organism>
    <name type="scientific">Baumannia cicadellinicola subsp. Homalodisca coagulata</name>
    <dbReference type="NCBI Taxonomy" id="374463"/>
    <lineage>
        <taxon>Bacteria</taxon>
        <taxon>Pseudomonadati</taxon>
        <taxon>Pseudomonadota</taxon>
        <taxon>Gammaproteobacteria</taxon>
        <taxon>Candidatus Palibaumannia</taxon>
    </lineage>
</organism>
<reference key="1">
    <citation type="journal article" date="2006" name="PLoS Biol.">
        <title>Metabolic complementarity and genomics of the dual bacterial symbiosis of sharpshooters.</title>
        <authorList>
            <person name="Wu D."/>
            <person name="Daugherty S.C."/>
            <person name="Van Aken S.E."/>
            <person name="Pai G.H."/>
            <person name="Watkins K.L."/>
            <person name="Khouri H."/>
            <person name="Tallon L.J."/>
            <person name="Zaborsky J.M."/>
            <person name="Dunbar H.E."/>
            <person name="Tran P.L."/>
            <person name="Moran N.A."/>
            <person name="Eisen J.A."/>
        </authorList>
    </citation>
    <scope>NUCLEOTIDE SEQUENCE [LARGE SCALE GENOMIC DNA]</scope>
</reference>
<sequence>MQVTQRWNREQAISLFNKPFFDLLFQAQQVHRKYFRLGQVQISTLLSIKTGNCAEDCKYCPQSSHYETKLDNEPLVQLPQVLAAAKKASDAGSTRFCIGAAWKKIHDRDMPLLEQIVTGVKAIGLETCMTLGILKPQQAQRLAKAGLDFYNHNLDTSPEFYHSIVTTRSYQDRLNTIENVRKAGIKICSGGIIGLGETISDRAGLLVELANLPEPPSSVPINMLVKVRGTPMFDNKDVDPFDLIRMIAVTRIMMPTSYVRLSAGREQMNEQTQAICFMAGANSIFYGRKLLTSSNPTEDSDKRLFRKLGMQIEKHTTIKNSNWKKKKLLLHDNQQHDNTISS</sequence>
<evidence type="ECO:0000255" key="1">
    <source>
        <dbReference type="HAMAP-Rule" id="MF_01694"/>
    </source>
</evidence>
<evidence type="ECO:0000255" key="2">
    <source>
        <dbReference type="PROSITE-ProRule" id="PRU01266"/>
    </source>
</evidence>
<proteinExistence type="inferred from homology"/>
<comment type="function">
    <text evidence="1">Catalyzes the conversion of dethiobiotin (DTB) to biotin by the insertion of a sulfur atom into dethiobiotin via a radical-based mechanism.</text>
</comment>
<comment type="catalytic activity">
    <reaction evidence="1">
        <text>(4R,5S)-dethiobiotin + (sulfur carrier)-SH + 2 reduced [2Fe-2S]-[ferredoxin] + 2 S-adenosyl-L-methionine = (sulfur carrier)-H + biotin + 2 5'-deoxyadenosine + 2 L-methionine + 2 oxidized [2Fe-2S]-[ferredoxin]</text>
        <dbReference type="Rhea" id="RHEA:22060"/>
        <dbReference type="Rhea" id="RHEA-COMP:10000"/>
        <dbReference type="Rhea" id="RHEA-COMP:10001"/>
        <dbReference type="Rhea" id="RHEA-COMP:14737"/>
        <dbReference type="Rhea" id="RHEA-COMP:14739"/>
        <dbReference type="ChEBI" id="CHEBI:17319"/>
        <dbReference type="ChEBI" id="CHEBI:29917"/>
        <dbReference type="ChEBI" id="CHEBI:33737"/>
        <dbReference type="ChEBI" id="CHEBI:33738"/>
        <dbReference type="ChEBI" id="CHEBI:57586"/>
        <dbReference type="ChEBI" id="CHEBI:57844"/>
        <dbReference type="ChEBI" id="CHEBI:59789"/>
        <dbReference type="ChEBI" id="CHEBI:64428"/>
        <dbReference type="ChEBI" id="CHEBI:149473"/>
        <dbReference type="EC" id="2.8.1.6"/>
    </reaction>
</comment>
<comment type="cofactor">
    <cofactor evidence="1">
        <name>[4Fe-4S] cluster</name>
        <dbReference type="ChEBI" id="CHEBI:49883"/>
    </cofactor>
    <text evidence="1">Binds 1 [4Fe-4S] cluster. The cluster is coordinated with 3 cysteines and an exchangeable S-adenosyl-L-methionine.</text>
</comment>
<comment type="cofactor">
    <cofactor evidence="1">
        <name>[2Fe-2S] cluster</name>
        <dbReference type="ChEBI" id="CHEBI:190135"/>
    </cofactor>
    <text evidence="1">Binds 1 [2Fe-2S] cluster. The cluster is coordinated with 3 cysteines and 1 arginine.</text>
</comment>
<comment type="pathway">
    <text evidence="1">Cofactor biosynthesis; biotin biosynthesis; biotin from 7,8-diaminononanoate: step 2/2.</text>
</comment>
<comment type="subunit">
    <text evidence="1">Homodimer.</text>
</comment>
<comment type="similarity">
    <text evidence="1">Belongs to the radical SAM superfamily. Biotin synthase family.</text>
</comment>
<name>BIOB_BAUCH</name>
<keyword id="KW-0001">2Fe-2S</keyword>
<keyword id="KW-0004">4Fe-4S</keyword>
<keyword id="KW-0093">Biotin biosynthesis</keyword>
<keyword id="KW-0408">Iron</keyword>
<keyword id="KW-0411">Iron-sulfur</keyword>
<keyword id="KW-0479">Metal-binding</keyword>
<keyword id="KW-1185">Reference proteome</keyword>
<keyword id="KW-0949">S-adenosyl-L-methionine</keyword>
<keyword id="KW-0808">Transferase</keyword>
<protein>
    <recommendedName>
        <fullName evidence="1">Biotin synthase</fullName>
        <ecNumber evidence="1">2.8.1.6</ecNumber>
    </recommendedName>
</protein>
<dbReference type="EC" id="2.8.1.6" evidence="1"/>
<dbReference type="EMBL" id="CP000238">
    <property type="protein sequence ID" value="ABF14204.1"/>
    <property type="molecule type" value="Genomic_DNA"/>
</dbReference>
<dbReference type="RefSeq" id="WP_011520429.1">
    <property type="nucleotide sequence ID" value="NC_007984.1"/>
</dbReference>
<dbReference type="SMR" id="Q1LTL8"/>
<dbReference type="STRING" id="374463.BCI_0246"/>
<dbReference type="KEGG" id="bci:BCI_0246"/>
<dbReference type="HOGENOM" id="CLU_033172_1_2_6"/>
<dbReference type="OrthoDB" id="9786826at2"/>
<dbReference type="UniPathway" id="UPA00078">
    <property type="reaction ID" value="UER00162"/>
</dbReference>
<dbReference type="Proteomes" id="UP000002427">
    <property type="component" value="Chromosome"/>
</dbReference>
<dbReference type="GO" id="GO:0051537">
    <property type="term" value="F:2 iron, 2 sulfur cluster binding"/>
    <property type="evidence" value="ECO:0007669"/>
    <property type="project" value="UniProtKB-KW"/>
</dbReference>
<dbReference type="GO" id="GO:0051539">
    <property type="term" value="F:4 iron, 4 sulfur cluster binding"/>
    <property type="evidence" value="ECO:0007669"/>
    <property type="project" value="UniProtKB-KW"/>
</dbReference>
<dbReference type="GO" id="GO:0004076">
    <property type="term" value="F:biotin synthase activity"/>
    <property type="evidence" value="ECO:0007669"/>
    <property type="project" value="UniProtKB-UniRule"/>
</dbReference>
<dbReference type="GO" id="GO:0005506">
    <property type="term" value="F:iron ion binding"/>
    <property type="evidence" value="ECO:0007669"/>
    <property type="project" value="UniProtKB-UniRule"/>
</dbReference>
<dbReference type="GO" id="GO:0009102">
    <property type="term" value="P:biotin biosynthetic process"/>
    <property type="evidence" value="ECO:0007669"/>
    <property type="project" value="UniProtKB-UniRule"/>
</dbReference>
<dbReference type="CDD" id="cd01335">
    <property type="entry name" value="Radical_SAM"/>
    <property type="match status" value="1"/>
</dbReference>
<dbReference type="FunFam" id="3.20.20.70:FF:000011">
    <property type="entry name" value="Biotin synthase"/>
    <property type="match status" value="1"/>
</dbReference>
<dbReference type="Gene3D" id="3.20.20.70">
    <property type="entry name" value="Aldolase class I"/>
    <property type="match status" value="1"/>
</dbReference>
<dbReference type="HAMAP" id="MF_01694">
    <property type="entry name" value="BioB"/>
    <property type="match status" value="1"/>
</dbReference>
<dbReference type="InterPro" id="IPR013785">
    <property type="entry name" value="Aldolase_TIM"/>
</dbReference>
<dbReference type="InterPro" id="IPR010722">
    <property type="entry name" value="BATS_dom"/>
</dbReference>
<dbReference type="InterPro" id="IPR002684">
    <property type="entry name" value="Biotin_synth/BioAB"/>
</dbReference>
<dbReference type="InterPro" id="IPR024177">
    <property type="entry name" value="Biotin_synthase"/>
</dbReference>
<dbReference type="InterPro" id="IPR006638">
    <property type="entry name" value="Elp3/MiaA/NifB-like_rSAM"/>
</dbReference>
<dbReference type="InterPro" id="IPR007197">
    <property type="entry name" value="rSAM"/>
</dbReference>
<dbReference type="NCBIfam" id="TIGR00433">
    <property type="entry name" value="bioB"/>
    <property type="match status" value="1"/>
</dbReference>
<dbReference type="PANTHER" id="PTHR22976">
    <property type="entry name" value="BIOTIN SYNTHASE"/>
    <property type="match status" value="1"/>
</dbReference>
<dbReference type="PANTHER" id="PTHR22976:SF2">
    <property type="entry name" value="BIOTIN SYNTHASE, MITOCHONDRIAL"/>
    <property type="match status" value="1"/>
</dbReference>
<dbReference type="Pfam" id="PF06968">
    <property type="entry name" value="BATS"/>
    <property type="match status" value="1"/>
</dbReference>
<dbReference type="Pfam" id="PF04055">
    <property type="entry name" value="Radical_SAM"/>
    <property type="match status" value="1"/>
</dbReference>
<dbReference type="PIRSF" id="PIRSF001619">
    <property type="entry name" value="Biotin_synth"/>
    <property type="match status" value="1"/>
</dbReference>
<dbReference type="SFLD" id="SFLDF00272">
    <property type="entry name" value="biotin_synthase"/>
    <property type="match status" value="1"/>
</dbReference>
<dbReference type="SFLD" id="SFLDG01278">
    <property type="entry name" value="biotin_synthase_like"/>
    <property type="match status" value="1"/>
</dbReference>
<dbReference type="SMART" id="SM00876">
    <property type="entry name" value="BATS"/>
    <property type="match status" value="1"/>
</dbReference>
<dbReference type="SMART" id="SM00729">
    <property type="entry name" value="Elp3"/>
    <property type="match status" value="1"/>
</dbReference>
<dbReference type="SUPFAM" id="SSF102114">
    <property type="entry name" value="Radical SAM enzymes"/>
    <property type="match status" value="1"/>
</dbReference>
<dbReference type="PROSITE" id="PS51918">
    <property type="entry name" value="RADICAL_SAM"/>
    <property type="match status" value="1"/>
</dbReference>
<gene>
    <name evidence="1" type="primary">bioB</name>
    <name type="ordered locus">BCI_0246</name>
</gene>